<accession>Q8F7K0</accession>
<gene>
    <name evidence="1" type="primary">rbfA</name>
    <name type="ordered locus">LA_0944</name>
</gene>
<sequence>MNPIRRRKIEAEAVRTVAMMILSGKVKDPRVHMVSVHRAEISEDGKNMKVFVTAICTDKKKIKVLSGLNSASGLFQATLSGKLGLRITPRMHFLWDEEYIQSLDESLRLTRKPTNTD</sequence>
<dbReference type="EMBL" id="AE010300">
    <property type="protein sequence ID" value="AAN48143.1"/>
    <property type="molecule type" value="Genomic_DNA"/>
</dbReference>
<dbReference type="RefSeq" id="NP_711125.1">
    <property type="nucleotide sequence ID" value="NC_004342.2"/>
</dbReference>
<dbReference type="RefSeq" id="WP_001068307.1">
    <property type="nucleotide sequence ID" value="NC_004342.2"/>
</dbReference>
<dbReference type="SMR" id="Q8F7K0"/>
<dbReference type="FunCoup" id="Q8F7K0">
    <property type="interactions" value="423"/>
</dbReference>
<dbReference type="STRING" id="189518.LA_0944"/>
<dbReference type="PaxDb" id="189518-LA_0944"/>
<dbReference type="EnsemblBacteria" id="AAN48143">
    <property type="protein sequence ID" value="AAN48143"/>
    <property type="gene ID" value="LA_0944"/>
</dbReference>
<dbReference type="KEGG" id="lil:LA_0944"/>
<dbReference type="PATRIC" id="fig|189518.3.peg.946"/>
<dbReference type="HOGENOM" id="CLU_089475_5_1_12"/>
<dbReference type="InParanoid" id="Q8F7K0"/>
<dbReference type="OrthoDB" id="370444at2"/>
<dbReference type="Proteomes" id="UP000001408">
    <property type="component" value="Chromosome I"/>
</dbReference>
<dbReference type="GO" id="GO:0005829">
    <property type="term" value="C:cytosol"/>
    <property type="evidence" value="ECO:0000318"/>
    <property type="project" value="GO_Central"/>
</dbReference>
<dbReference type="GO" id="GO:0043024">
    <property type="term" value="F:ribosomal small subunit binding"/>
    <property type="evidence" value="ECO:0000318"/>
    <property type="project" value="GO_Central"/>
</dbReference>
<dbReference type="GO" id="GO:0030490">
    <property type="term" value="P:maturation of SSU-rRNA"/>
    <property type="evidence" value="ECO:0007669"/>
    <property type="project" value="UniProtKB-UniRule"/>
</dbReference>
<dbReference type="GO" id="GO:0042254">
    <property type="term" value="P:ribosome biogenesis"/>
    <property type="evidence" value="ECO:0000318"/>
    <property type="project" value="GO_Central"/>
</dbReference>
<dbReference type="FunFam" id="3.30.300.20:FF:000026">
    <property type="entry name" value="Ribosome-binding factor A"/>
    <property type="match status" value="1"/>
</dbReference>
<dbReference type="Gene3D" id="3.30.300.20">
    <property type="match status" value="1"/>
</dbReference>
<dbReference type="HAMAP" id="MF_00003">
    <property type="entry name" value="RbfA"/>
    <property type="match status" value="1"/>
</dbReference>
<dbReference type="InterPro" id="IPR015946">
    <property type="entry name" value="KH_dom-like_a/b"/>
</dbReference>
<dbReference type="InterPro" id="IPR000238">
    <property type="entry name" value="RbfA"/>
</dbReference>
<dbReference type="InterPro" id="IPR023799">
    <property type="entry name" value="RbfA_dom_sf"/>
</dbReference>
<dbReference type="InterPro" id="IPR020053">
    <property type="entry name" value="Ribosome-bd_factorA_CS"/>
</dbReference>
<dbReference type="NCBIfam" id="TIGR00082">
    <property type="entry name" value="rbfA"/>
    <property type="match status" value="1"/>
</dbReference>
<dbReference type="PANTHER" id="PTHR33515">
    <property type="entry name" value="RIBOSOME-BINDING FACTOR A, CHLOROPLASTIC-RELATED"/>
    <property type="match status" value="1"/>
</dbReference>
<dbReference type="PANTHER" id="PTHR33515:SF1">
    <property type="entry name" value="RIBOSOME-BINDING FACTOR A, CHLOROPLASTIC-RELATED"/>
    <property type="match status" value="1"/>
</dbReference>
<dbReference type="Pfam" id="PF02033">
    <property type="entry name" value="RBFA"/>
    <property type="match status" value="1"/>
</dbReference>
<dbReference type="SUPFAM" id="SSF89919">
    <property type="entry name" value="Ribosome-binding factor A, RbfA"/>
    <property type="match status" value="1"/>
</dbReference>
<dbReference type="PROSITE" id="PS01319">
    <property type="entry name" value="RBFA"/>
    <property type="match status" value="1"/>
</dbReference>
<reference key="1">
    <citation type="journal article" date="2003" name="Nature">
        <title>Unique physiological and pathogenic features of Leptospira interrogans revealed by whole-genome sequencing.</title>
        <authorList>
            <person name="Ren S.-X."/>
            <person name="Fu G."/>
            <person name="Jiang X.-G."/>
            <person name="Zeng R."/>
            <person name="Miao Y.-G."/>
            <person name="Xu H."/>
            <person name="Zhang Y.-X."/>
            <person name="Xiong H."/>
            <person name="Lu G."/>
            <person name="Lu L.-F."/>
            <person name="Jiang H.-Q."/>
            <person name="Jia J."/>
            <person name="Tu Y.-F."/>
            <person name="Jiang J.-X."/>
            <person name="Gu W.-Y."/>
            <person name="Zhang Y.-Q."/>
            <person name="Cai Z."/>
            <person name="Sheng H.-H."/>
            <person name="Yin H.-F."/>
            <person name="Zhang Y."/>
            <person name="Zhu G.-F."/>
            <person name="Wan M."/>
            <person name="Huang H.-L."/>
            <person name="Qian Z."/>
            <person name="Wang S.-Y."/>
            <person name="Ma W."/>
            <person name="Yao Z.-J."/>
            <person name="Shen Y."/>
            <person name="Qiang B.-Q."/>
            <person name="Xia Q.-C."/>
            <person name="Guo X.-K."/>
            <person name="Danchin A."/>
            <person name="Saint Girons I."/>
            <person name="Somerville R.L."/>
            <person name="Wen Y.-M."/>
            <person name="Shi M.-H."/>
            <person name="Chen Z."/>
            <person name="Xu J.-G."/>
            <person name="Zhao G.-P."/>
        </authorList>
    </citation>
    <scope>NUCLEOTIDE SEQUENCE [LARGE SCALE GENOMIC DNA]</scope>
    <source>
        <strain>56601</strain>
    </source>
</reference>
<feature type="chain" id="PRO_0000102685" description="Ribosome-binding factor A">
    <location>
        <begin position="1"/>
        <end position="117"/>
    </location>
</feature>
<name>RBFA_LEPIN</name>
<keyword id="KW-0963">Cytoplasm</keyword>
<keyword id="KW-1185">Reference proteome</keyword>
<keyword id="KW-0690">Ribosome biogenesis</keyword>
<comment type="function">
    <text evidence="1">One of several proteins that assist in the late maturation steps of the functional core of the 30S ribosomal subunit. Associates with free 30S ribosomal subunits (but not with 30S subunits that are part of 70S ribosomes or polysomes). Required for efficient processing of 16S rRNA. May interact with the 5'-terminal helix region of 16S rRNA.</text>
</comment>
<comment type="subunit">
    <text evidence="1">Monomer. Binds 30S ribosomal subunits, but not 50S ribosomal subunits or 70S ribosomes.</text>
</comment>
<comment type="subcellular location">
    <subcellularLocation>
        <location evidence="1">Cytoplasm</location>
    </subcellularLocation>
</comment>
<comment type="similarity">
    <text evidence="1">Belongs to the RbfA family.</text>
</comment>
<protein>
    <recommendedName>
        <fullName evidence="1">Ribosome-binding factor A</fullName>
    </recommendedName>
</protein>
<organism>
    <name type="scientific">Leptospira interrogans serogroup Icterohaemorrhagiae serovar Lai (strain 56601)</name>
    <dbReference type="NCBI Taxonomy" id="189518"/>
    <lineage>
        <taxon>Bacteria</taxon>
        <taxon>Pseudomonadati</taxon>
        <taxon>Spirochaetota</taxon>
        <taxon>Spirochaetia</taxon>
        <taxon>Leptospirales</taxon>
        <taxon>Leptospiraceae</taxon>
        <taxon>Leptospira</taxon>
    </lineage>
</organism>
<proteinExistence type="inferred from homology"/>
<evidence type="ECO:0000255" key="1">
    <source>
        <dbReference type="HAMAP-Rule" id="MF_00003"/>
    </source>
</evidence>